<accession>Q66HD5</accession>
<proteinExistence type="evidence at protein level"/>
<keyword id="KW-0040">ANK repeat</keyword>
<keyword id="KW-0597">Phosphoprotein</keyword>
<keyword id="KW-1185">Reference proteome</keyword>
<keyword id="KW-0677">Repeat</keyword>
<dbReference type="EMBL" id="BC081910">
    <property type="protein sequence ID" value="AAH81910.1"/>
    <property type="molecule type" value="mRNA"/>
</dbReference>
<dbReference type="RefSeq" id="NP_001013964.1">
    <property type="nucleotide sequence ID" value="NM_001013942.2"/>
</dbReference>
<dbReference type="RefSeq" id="NP_001415537.1">
    <property type="nucleotide sequence ID" value="NM_001428608.1"/>
</dbReference>
<dbReference type="RefSeq" id="NP_001415538.1">
    <property type="nucleotide sequence ID" value="NM_001428609.1"/>
</dbReference>
<dbReference type="SMR" id="Q66HD5"/>
<dbReference type="FunCoup" id="Q66HD5">
    <property type="interactions" value="211"/>
</dbReference>
<dbReference type="STRING" id="10116.ENSRNOP00000063078"/>
<dbReference type="iPTMnet" id="Q66HD5"/>
<dbReference type="PhosphoSitePlus" id="Q66HD5"/>
<dbReference type="PaxDb" id="10116-ENSRNOP00000063078"/>
<dbReference type="GeneID" id="298801"/>
<dbReference type="KEGG" id="rno:298801"/>
<dbReference type="UCSC" id="RGD:1311049">
    <property type="organism name" value="rat"/>
</dbReference>
<dbReference type="AGR" id="RGD:1311049"/>
<dbReference type="CTD" id="79745"/>
<dbReference type="RGD" id="1311049">
    <property type="gene designation" value="Clip4"/>
</dbReference>
<dbReference type="eggNOG" id="KOG4568">
    <property type="taxonomic scope" value="Eukaryota"/>
</dbReference>
<dbReference type="InParanoid" id="Q66HD5"/>
<dbReference type="OrthoDB" id="49386at9989"/>
<dbReference type="PRO" id="PR:Q66HD5"/>
<dbReference type="Proteomes" id="UP000002494">
    <property type="component" value="Unplaced"/>
</dbReference>
<dbReference type="FunFam" id="1.25.40.20:FF:000044">
    <property type="entry name" value="CAP-Gly domain containing linker protein 3"/>
    <property type="match status" value="1"/>
</dbReference>
<dbReference type="FunFam" id="2.30.30.190:FF:000005">
    <property type="entry name" value="CAP-Gly domain containing linker protein 3"/>
    <property type="match status" value="2"/>
</dbReference>
<dbReference type="Gene3D" id="1.25.40.20">
    <property type="entry name" value="Ankyrin repeat-containing domain"/>
    <property type="match status" value="1"/>
</dbReference>
<dbReference type="Gene3D" id="2.30.30.190">
    <property type="entry name" value="CAP Gly-rich-like domain"/>
    <property type="match status" value="2"/>
</dbReference>
<dbReference type="InterPro" id="IPR002110">
    <property type="entry name" value="Ankyrin_rpt"/>
</dbReference>
<dbReference type="InterPro" id="IPR036770">
    <property type="entry name" value="Ankyrin_rpt-contain_sf"/>
</dbReference>
<dbReference type="InterPro" id="IPR036859">
    <property type="entry name" value="CAP-Gly_dom_sf"/>
</dbReference>
<dbReference type="InterPro" id="IPR000938">
    <property type="entry name" value="CAP-Gly_domain"/>
</dbReference>
<dbReference type="PANTHER" id="PTHR18916:SF32">
    <property type="entry name" value="CAP-GLY DOMAIN-CONTAINING LINKER PROTEIN 4"/>
    <property type="match status" value="1"/>
</dbReference>
<dbReference type="PANTHER" id="PTHR18916">
    <property type="entry name" value="DYNACTIN 1-RELATED MICROTUBULE-BINDING"/>
    <property type="match status" value="1"/>
</dbReference>
<dbReference type="Pfam" id="PF12796">
    <property type="entry name" value="Ank_2"/>
    <property type="match status" value="1"/>
</dbReference>
<dbReference type="Pfam" id="PF01302">
    <property type="entry name" value="CAP_GLY"/>
    <property type="match status" value="2"/>
</dbReference>
<dbReference type="SMART" id="SM00248">
    <property type="entry name" value="ANK"/>
    <property type="match status" value="3"/>
</dbReference>
<dbReference type="SMART" id="SM01052">
    <property type="entry name" value="CAP_GLY"/>
    <property type="match status" value="2"/>
</dbReference>
<dbReference type="SUPFAM" id="SSF48403">
    <property type="entry name" value="Ankyrin repeat"/>
    <property type="match status" value="1"/>
</dbReference>
<dbReference type="SUPFAM" id="SSF74924">
    <property type="entry name" value="Cap-Gly domain"/>
    <property type="match status" value="2"/>
</dbReference>
<dbReference type="PROSITE" id="PS50297">
    <property type="entry name" value="ANK_REP_REGION"/>
    <property type="match status" value="1"/>
</dbReference>
<dbReference type="PROSITE" id="PS50088">
    <property type="entry name" value="ANK_REPEAT"/>
    <property type="match status" value="1"/>
</dbReference>
<dbReference type="PROSITE" id="PS00845">
    <property type="entry name" value="CAP_GLY_1"/>
    <property type="match status" value="1"/>
</dbReference>
<dbReference type="PROSITE" id="PS50245">
    <property type="entry name" value="CAP_GLY_2"/>
    <property type="match status" value="2"/>
</dbReference>
<protein>
    <recommendedName>
        <fullName>CAP-Gly domain-containing linker protein 4</fullName>
    </recommendedName>
    <alternativeName>
        <fullName>Restin-like protein 2</fullName>
    </alternativeName>
</protein>
<evidence type="ECO:0000255" key="1">
    <source>
        <dbReference type="PROSITE-ProRule" id="PRU00045"/>
    </source>
</evidence>
<evidence type="ECO:0000256" key="2">
    <source>
        <dbReference type="SAM" id="MobiDB-lite"/>
    </source>
</evidence>
<evidence type="ECO:0007744" key="3">
    <source>
    </source>
</evidence>
<feature type="chain" id="PRO_0000083531" description="CAP-Gly domain-containing linker protein 4">
    <location>
        <begin position="1"/>
        <end position="599"/>
    </location>
</feature>
<feature type="repeat" description="ANK 1">
    <location>
        <begin position="65"/>
        <end position="101"/>
    </location>
</feature>
<feature type="repeat" description="ANK 2">
    <location>
        <begin position="149"/>
        <end position="180"/>
    </location>
</feature>
<feature type="repeat" description="ANK 3">
    <location>
        <begin position="186"/>
        <end position="215"/>
    </location>
</feature>
<feature type="domain" description="CAP-Gly 1" evidence="1">
    <location>
        <begin position="303"/>
        <end position="345"/>
    </location>
</feature>
<feature type="domain" description="CAP-Gly 2" evidence="1">
    <location>
        <begin position="505"/>
        <end position="547"/>
    </location>
</feature>
<feature type="region of interest" description="Disordered" evidence="2">
    <location>
        <begin position="387"/>
        <end position="482"/>
    </location>
</feature>
<feature type="region of interest" description="Disordered" evidence="2">
    <location>
        <begin position="565"/>
        <end position="599"/>
    </location>
</feature>
<feature type="compositionally biased region" description="Low complexity" evidence="2">
    <location>
        <begin position="443"/>
        <end position="462"/>
    </location>
</feature>
<feature type="compositionally biased region" description="Polar residues" evidence="2">
    <location>
        <begin position="468"/>
        <end position="478"/>
    </location>
</feature>
<feature type="compositionally biased region" description="Low complexity" evidence="2">
    <location>
        <begin position="576"/>
        <end position="587"/>
    </location>
</feature>
<feature type="modified residue" description="Phosphoserine" evidence="3">
    <location>
        <position position="557"/>
    </location>
</feature>
<gene>
    <name type="primary">Clip4</name>
    <name type="synonym">Rsnl2</name>
</gene>
<sequence length="599" mass="64645">MTIEDLPDIPLEGSSLIGRYPFLFTGSDTSVIFSISAAPMPSDCEFSFFDPNDASCQEILFDPKTSVSELFAILRQWVPQVQQNIDIIGNEILKRGCNVNDRDGLTDMTLLHYTCKSGAHGIGDVETAVKFAAQLIDLGADASLRSRWTNMNALHYASYFDVPELIRVLLKTSKPKDVDATCSDFNFGTALHIAAHNLCAGAVKTLLELGANPAFRNDKGQIPADVVPDPVDMPLEMADAAAIAKEIKQMLLDSMPLPCTITKATLPNCDITTSKAMLTTLGLKLGDRVVIAGQKVGTLRFCGTTEFASGQWAGIELDEPEGKNNGSVGRVQYFKCAPKYGIFAPLSKITKVKDGRKNITHTPSTKATLHARSQKVDVAHVTSKVNSGLMTSKKENASESTLSLPRSEELKTVAKNDATQPGCISSSSSTSSLDHKQSHPKKLSTSSSSGKKTLSKSPSLPSRASAGLKSSTTSAANNTHREGALRLGERVLVVGQRVGTIKFFGTTNFAPGYWYGIELEKPHGKNDGSVGGVQYFSCSPRYGIFAPPSRVQRLSDSLDTLSEISSNKQNHSYPGFRRSFSTTSASSQKEINRRNAFAK</sequence>
<organism>
    <name type="scientific">Rattus norvegicus</name>
    <name type="common">Rat</name>
    <dbReference type="NCBI Taxonomy" id="10116"/>
    <lineage>
        <taxon>Eukaryota</taxon>
        <taxon>Metazoa</taxon>
        <taxon>Chordata</taxon>
        <taxon>Craniata</taxon>
        <taxon>Vertebrata</taxon>
        <taxon>Euteleostomi</taxon>
        <taxon>Mammalia</taxon>
        <taxon>Eutheria</taxon>
        <taxon>Euarchontoglires</taxon>
        <taxon>Glires</taxon>
        <taxon>Rodentia</taxon>
        <taxon>Myomorpha</taxon>
        <taxon>Muroidea</taxon>
        <taxon>Muridae</taxon>
        <taxon>Murinae</taxon>
        <taxon>Rattus</taxon>
    </lineage>
</organism>
<name>CLIP4_RAT</name>
<reference key="1">
    <citation type="journal article" date="2004" name="Genome Res.">
        <title>The status, quality, and expansion of the NIH full-length cDNA project: the Mammalian Gene Collection (MGC).</title>
        <authorList>
            <consortium name="The MGC Project Team"/>
        </authorList>
    </citation>
    <scope>NUCLEOTIDE SEQUENCE [LARGE SCALE MRNA]</scope>
    <source>
        <tissue>Testis</tissue>
    </source>
</reference>
<reference key="2">
    <citation type="journal article" date="2012" name="Nat. Commun.">
        <title>Quantitative maps of protein phosphorylation sites across 14 different rat organs and tissues.</title>
        <authorList>
            <person name="Lundby A."/>
            <person name="Secher A."/>
            <person name="Lage K."/>
            <person name="Nordsborg N.B."/>
            <person name="Dmytriyev A."/>
            <person name="Lundby C."/>
            <person name="Olsen J.V."/>
        </authorList>
    </citation>
    <scope>PHOSPHORYLATION [LARGE SCALE ANALYSIS] AT SER-557</scope>
    <scope>IDENTIFICATION BY MASS SPECTROMETRY [LARGE SCALE ANALYSIS]</scope>
</reference>